<name>LSP1_YEAST</name>
<evidence type="ECO:0000256" key="1">
    <source>
        <dbReference type="SAM" id="MobiDB-lite"/>
    </source>
</evidence>
<evidence type="ECO:0000269" key="2">
    <source>
    </source>
</evidence>
<evidence type="ECO:0000269" key="3">
    <source>
    </source>
</evidence>
<evidence type="ECO:0000269" key="4">
    <source>
    </source>
</evidence>
<evidence type="ECO:0000269" key="5">
    <source>
    </source>
</evidence>
<evidence type="ECO:0000269" key="6">
    <source>
    </source>
</evidence>
<evidence type="ECO:0007744" key="7">
    <source>
    </source>
</evidence>
<evidence type="ECO:0007744" key="8">
    <source>
    </source>
</evidence>
<evidence type="ECO:0007744" key="9">
    <source>
    </source>
</evidence>
<evidence type="ECO:0007744" key="10">
    <source>
    </source>
</evidence>
<evidence type="ECO:0007829" key="11">
    <source>
        <dbReference type="PDB" id="3PLT"/>
    </source>
</evidence>
<evidence type="ECO:0007829" key="12">
    <source>
        <dbReference type="PDB" id="8QB8"/>
    </source>
</evidence>
<comment type="function">
    <text evidence="4">Together with PIL1, main component of eisosomes, structures at the cell periphery underneath the plasma membrane that mark the site of endocytosis. Negative regulator of cell wall integrity (CWI) in unstressed cells, probably by inhibiting protein kinase PKH1/PHK2 activity and regulating their downstream CWI pathways PKC1-MAP kinase pathway and protein kinase YPK1 pathway. Activity may be regulated by the transient increase of sphingolipid long chain bases (LCBs) during heat stress.</text>
</comment>
<comment type="interaction">
    <interactant intactId="EBI-34978">
        <id>Q12230</id>
    </interactant>
    <interactant intactId="EBI-16255">
        <id>P35719</id>
        <label>MRP8</label>
    </interactant>
    <organismsDiffer>false</organismsDiffer>
    <experiments>3</experiments>
</comment>
<comment type="interaction">
    <interactant intactId="EBI-34978">
        <id>Q12230</id>
    </interactant>
    <interactant intactId="EBI-23225">
        <id>P53252</id>
        <label>PIL1</label>
    </interactant>
    <organismsDiffer>false</organismsDiffer>
    <experiments>7</experiments>
</comment>
<comment type="subcellular location">
    <subcellularLocation>
        <location evidence="2 5">Cytoplasm</location>
        <location evidence="2 5">Cell cortex</location>
    </subcellularLocation>
    <text>Localizes at eisosomes, structures which colocalize with sites of protein and lipid endocytosis.</text>
</comment>
<comment type="PTM">
    <text evidence="4">Phosphorylated by PKH1 and PKH2. Phosphorylation is stimulated by sphingolipid long chain bases (LCBs).</text>
</comment>
<comment type="PTM">
    <text evidence="6">N-glycosylated.</text>
</comment>
<comment type="miscellaneous">
    <text evidence="3">Present with 104485 molecules/cell in log phase SD medium.</text>
</comment>
<sequence>MHRTYSLRNQRAPTAAELQAPPPPPSSTKSKFFGKASIASSFRKNAAGNFGPELARKLSQLVKTEKGVLRAMEVVASERREAAKQLSLWGADNDDDVSDVTDKLGVLIYELGELQDQFIDKYDQYRVTLKSIRNIEASVQPSRDRKEKITDEIAHLKYKDPQSTKIPVLEQELVRAEAESLVAEAQLSNITREKLKAAYSYMFDSLRELSEKFALIAGYGKALLELLDDSPVTPGEARPAYDGYEASRQIIMDAESALESWTLDMAAVKPTLSFHQTVDDVYEDEDGEEEEEPEIQNGDIPGQVVEEEEVEWTTEVPVDDEAHEADHHVSQNGHTSGSENI</sequence>
<accession>Q12230</accession>
<accession>D6W408</accession>
<dbReference type="EMBL" id="U33335">
    <property type="protein sequence ID" value="AAB68101.1"/>
    <property type="molecule type" value="Genomic_DNA"/>
</dbReference>
<dbReference type="EMBL" id="Z48483">
    <property type="protein sequence ID" value="CAA88382.1"/>
    <property type="molecule type" value="Genomic_DNA"/>
</dbReference>
<dbReference type="EMBL" id="Z71255">
    <property type="protein sequence ID" value="CAA95037.1"/>
    <property type="molecule type" value="Genomic_DNA"/>
</dbReference>
<dbReference type="EMBL" id="BK006949">
    <property type="protein sequence ID" value="DAA11424.1"/>
    <property type="molecule type" value="Genomic_DNA"/>
</dbReference>
<dbReference type="PIR" id="S52527">
    <property type="entry name" value="S52527"/>
</dbReference>
<dbReference type="RefSeq" id="NP_015321.1">
    <property type="nucleotide sequence ID" value="NM_001183818.1"/>
</dbReference>
<dbReference type="PDB" id="3PLT">
    <property type="method" value="X-ray"/>
    <property type="resolution" value="2.90 A"/>
    <property type="chains" value="A/B/C=36-267"/>
</dbReference>
<dbReference type="PDB" id="8QB8">
    <property type="method" value="EM"/>
    <property type="resolution" value="3.20 A"/>
    <property type="chains" value="A/B/C/D/E/F/G/H/I/J/K/L/M/N=1-341"/>
</dbReference>
<dbReference type="PDBsum" id="3PLT"/>
<dbReference type="PDBsum" id="8QB8"/>
<dbReference type="SMR" id="Q12230"/>
<dbReference type="BioGRID" id="36173">
    <property type="interactions" value="203"/>
</dbReference>
<dbReference type="DIP" id="DIP-3993N"/>
<dbReference type="FunCoup" id="Q12230">
    <property type="interactions" value="441"/>
</dbReference>
<dbReference type="IntAct" id="Q12230">
    <property type="interactions" value="64"/>
</dbReference>
<dbReference type="MINT" id="Q12230"/>
<dbReference type="STRING" id="4932.YPL004C"/>
<dbReference type="TCDB" id="8.A.148.1.1">
    <property type="family name" value="the plasma membrane organizing center, eisosome (eisosome) family"/>
</dbReference>
<dbReference type="GlyGen" id="Q12230">
    <property type="glycosylation" value="1 site"/>
</dbReference>
<dbReference type="iPTMnet" id="Q12230"/>
<dbReference type="PaxDb" id="4932-YPL004C"/>
<dbReference type="PeptideAtlas" id="Q12230"/>
<dbReference type="TopDownProteomics" id="Q12230"/>
<dbReference type="EnsemblFungi" id="YPL004C_mRNA">
    <property type="protein sequence ID" value="YPL004C"/>
    <property type="gene ID" value="YPL004C"/>
</dbReference>
<dbReference type="GeneID" id="856103"/>
<dbReference type="KEGG" id="sce:YPL004C"/>
<dbReference type="AGR" id="SGD:S000005925"/>
<dbReference type="SGD" id="S000005925">
    <property type="gene designation" value="LSP1"/>
</dbReference>
<dbReference type="VEuPathDB" id="FungiDB:YPL004C"/>
<dbReference type="eggNOG" id="ENOG502QQ1T">
    <property type="taxonomic scope" value="Eukaryota"/>
</dbReference>
<dbReference type="GeneTree" id="ENSGT00940000176685"/>
<dbReference type="HOGENOM" id="CLU_046464_0_0_1"/>
<dbReference type="InParanoid" id="Q12230"/>
<dbReference type="OMA" id="WGYDNDD"/>
<dbReference type="OrthoDB" id="5599269at2759"/>
<dbReference type="BioCyc" id="YEAST:G3O-33923-MONOMER"/>
<dbReference type="BioGRID-ORCS" id="856103">
    <property type="hits" value="0 hits in 10 CRISPR screens"/>
</dbReference>
<dbReference type="EvolutionaryTrace" id="Q12230"/>
<dbReference type="PRO" id="PR:Q12230"/>
<dbReference type="Proteomes" id="UP000002311">
    <property type="component" value="Chromosome XVI"/>
</dbReference>
<dbReference type="RNAct" id="Q12230">
    <property type="molecule type" value="protein"/>
</dbReference>
<dbReference type="GO" id="GO:0071944">
    <property type="term" value="C:cell periphery"/>
    <property type="evidence" value="ECO:0007005"/>
    <property type="project" value="SGD"/>
</dbReference>
<dbReference type="GO" id="GO:0005737">
    <property type="term" value="C:cytoplasm"/>
    <property type="evidence" value="ECO:0007005"/>
    <property type="project" value="SGD"/>
</dbReference>
<dbReference type="GO" id="GO:0032126">
    <property type="term" value="C:eisosome"/>
    <property type="evidence" value="ECO:0000314"/>
    <property type="project" value="SGD"/>
</dbReference>
<dbReference type="GO" id="GO:0036286">
    <property type="term" value="C:eisosome filament"/>
    <property type="evidence" value="ECO:0000318"/>
    <property type="project" value="GO_Central"/>
</dbReference>
<dbReference type="GO" id="GO:0005741">
    <property type="term" value="C:mitochondrial outer membrane"/>
    <property type="evidence" value="ECO:0007005"/>
    <property type="project" value="SGD"/>
</dbReference>
<dbReference type="GO" id="GO:0005739">
    <property type="term" value="C:mitochondrion"/>
    <property type="evidence" value="ECO:0007005"/>
    <property type="project" value="SGD"/>
</dbReference>
<dbReference type="GO" id="GO:0005886">
    <property type="term" value="C:plasma membrane"/>
    <property type="evidence" value="ECO:0007005"/>
    <property type="project" value="SGD"/>
</dbReference>
<dbReference type="GO" id="GO:0008289">
    <property type="term" value="F:lipid binding"/>
    <property type="evidence" value="ECO:0000314"/>
    <property type="project" value="SGD"/>
</dbReference>
<dbReference type="GO" id="GO:0070941">
    <property type="term" value="P:eisosome assembly"/>
    <property type="evidence" value="ECO:0000315"/>
    <property type="project" value="SGD"/>
</dbReference>
<dbReference type="GO" id="GO:0006897">
    <property type="term" value="P:endocytosis"/>
    <property type="evidence" value="ECO:0000315"/>
    <property type="project" value="SGD"/>
</dbReference>
<dbReference type="GO" id="GO:0061024">
    <property type="term" value="P:membrane organization"/>
    <property type="evidence" value="ECO:0000315"/>
    <property type="project" value="SGD"/>
</dbReference>
<dbReference type="GO" id="GO:0009408">
    <property type="term" value="P:response to heat"/>
    <property type="evidence" value="ECO:0000315"/>
    <property type="project" value="SGD"/>
</dbReference>
<dbReference type="FunFam" id="1.20.1270.60:FF:000005">
    <property type="entry name" value="Sphingolipid long chain base-responsive pil1"/>
    <property type="match status" value="1"/>
</dbReference>
<dbReference type="Gene3D" id="1.20.1270.60">
    <property type="entry name" value="Arfaptin homology (AH) domain/BAR domain"/>
    <property type="match status" value="1"/>
</dbReference>
<dbReference type="InterPro" id="IPR027267">
    <property type="entry name" value="AH/BAR_dom_sf"/>
</dbReference>
<dbReference type="InterPro" id="IPR028245">
    <property type="entry name" value="PIL1/LSP1"/>
</dbReference>
<dbReference type="PANTHER" id="PTHR31962:SF3">
    <property type="entry name" value="SPHINGOLIPID LONG CHAIN BASE-RESPONSIVE PROTEIN LSP1"/>
    <property type="match status" value="1"/>
</dbReference>
<dbReference type="PANTHER" id="PTHR31962">
    <property type="entry name" value="SPHINGOLIPID LONG CHAIN BASE-RESPONSIVE PROTEIN PIL1"/>
    <property type="match status" value="1"/>
</dbReference>
<dbReference type="Pfam" id="PF13805">
    <property type="entry name" value="Pil1"/>
    <property type="match status" value="1"/>
</dbReference>
<gene>
    <name type="primary">LSP1</name>
    <name type="ordered locus">YPL004C</name>
</gene>
<feature type="chain" id="PRO_0000084505" description="Sphingolipid long chain base-responsive protein LSP1">
    <location>
        <begin position="1"/>
        <end position="341"/>
    </location>
</feature>
<feature type="region of interest" description="Disordered" evidence="1">
    <location>
        <begin position="1"/>
        <end position="32"/>
    </location>
</feature>
<feature type="region of interest" description="Disordered" evidence="1">
    <location>
        <begin position="282"/>
        <end position="341"/>
    </location>
</feature>
<feature type="compositionally biased region" description="Polar residues" evidence="1">
    <location>
        <begin position="1"/>
        <end position="11"/>
    </location>
</feature>
<feature type="compositionally biased region" description="Acidic residues" evidence="1">
    <location>
        <begin position="282"/>
        <end position="294"/>
    </location>
</feature>
<feature type="compositionally biased region" description="Acidic residues" evidence="1">
    <location>
        <begin position="305"/>
        <end position="323"/>
    </location>
</feature>
<feature type="compositionally biased region" description="Polar residues" evidence="1">
    <location>
        <begin position="330"/>
        <end position="341"/>
    </location>
</feature>
<feature type="modified residue" description="Phosphothreonine" evidence="7 8 9 10">
    <location>
        <position position="233"/>
    </location>
</feature>
<feature type="strand" evidence="12">
    <location>
        <begin position="5"/>
        <end position="9"/>
    </location>
</feature>
<feature type="helix" evidence="12">
    <location>
        <begin position="15"/>
        <end position="19"/>
    </location>
</feature>
<feature type="helix" evidence="12">
    <location>
        <begin position="39"/>
        <end position="47"/>
    </location>
</feature>
<feature type="turn" evidence="11">
    <location>
        <begin position="53"/>
        <end position="55"/>
    </location>
</feature>
<feature type="helix" evidence="11">
    <location>
        <begin position="56"/>
        <end position="91"/>
    </location>
</feature>
<feature type="helix" evidence="11">
    <location>
        <begin position="95"/>
        <end position="159"/>
    </location>
</feature>
<feature type="helix" evidence="11">
    <location>
        <begin position="165"/>
        <end position="224"/>
    </location>
</feature>
<feature type="strand" evidence="11">
    <location>
        <begin position="234"/>
        <end position="236"/>
    </location>
</feature>
<feature type="helix" evidence="11">
    <location>
        <begin position="244"/>
        <end position="260"/>
    </location>
</feature>
<reference key="1">
    <citation type="journal article" date="1997" name="Nature">
        <title>The nucleotide sequence of Saccharomyces cerevisiae chromosome XVI.</title>
        <authorList>
            <person name="Bussey H."/>
            <person name="Storms R.K."/>
            <person name="Ahmed A."/>
            <person name="Albermann K."/>
            <person name="Allen E."/>
            <person name="Ansorge W."/>
            <person name="Araujo R."/>
            <person name="Aparicio A."/>
            <person name="Barrell B.G."/>
            <person name="Badcock K."/>
            <person name="Benes V."/>
            <person name="Botstein D."/>
            <person name="Bowman S."/>
            <person name="Brueckner M."/>
            <person name="Carpenter J."/>
            <person name="Cherry J.M."/>
            <person name="Chung E."/>
            <person name="Churcher C.M."/>
            <person name="Coster F."/>
            <person name="Davis K."/>
            <person name="Davis R.W."/>
            <person name="Dietrich F.S."/>
            <person name="Delius H."/>
            <person name="DiPaolo T."/>
            <person name="Dubois E."/>
            <person name="Duesterhoeft A."/>
            <person name="Duncan M."/>
            <person name="Floeth M."/>
            <person name="Fortin N."/>
            <person name="Friesen J.D."/>
            <person name="Fritz C."/>
            <person name="Goffeau A."/>
            <person name="Hall J."/>
            <person name="Hebling U."/>
            <person name="Heumann K."/>
            <person name="Hilbert H."/>
            <person name="Hillier L.W."/>
            <person name="Hunicke-Smith S."/>
            <person name="Hyman R.W."/>
            <person name="Johnston M."/>
            <person name="Kalman S."/>
            <person name="Kleine K."/>
            <person name="Komp C."/>
            <person name="Kurdi O."/>
            <person name="Lashkari D."/>
            <person name="Lew H."/>
            <person name="Lin A."/>
            <person name="Lin D."/>
            <person name="Louis E.J."/>
            <person name="Marathe R."/>
            <person name="Messenguy F."/>
            <person name="Mewes H.-W."/>
            <person name="Mirtipati S."/>
            <person name="Moestl D."/>
            <person name="Mueller-Auer S."/>
            <person name="Namath A."/>
            <person name="Nentwich U."/>
            <person name="Oefner P."/>
            <person name="Pearson D."/>
            <person name="Petel F.X."/>
            <person name="Pohl T.M."/>
            <person name="Purnelle B."/>
            <person name="Rajandream M.A."/>
            <person name="Rechmann S."/>
            <person name="Rieger M."/>
            <person name="Riles L."/>
            <person name="Roberts D."/>
            <person name="Schaefer M."/>
            <person name="Scharfe M."/>
            <person name="Scherens B."/>
            <person name="Schramm S."/>
            <person name="Schroeder M."/>
            <person name="Sdicu A.-M."/>
            <person name="Tettelin H."/>
            <person name="Urrestarazu L.A."/>
            <person name="Ushinsky S."/>
            <person name="Vierendeels F."/>
            <person name="Vissers S."/>
            <person name="Voss H."/>
            <person name="Walsh S.V."/>
            <person name="Wambutt R."/>
            <person name="Wang Y."/>
            <person name="Wedler E."/>
            <person name="Wedler H."/>
            <person name="Winnett E."/>
            <person name="Zhong W.-W."/>
            <person name="Zollner A."/>
            <person name="Vo D.H."/>
            <person name="Hani J."/>
        </authorList>
    </citation>
    <scope>NUCLEOTIDE SEQUENCE [LARGE SCALE GENOMIC DNA]</scope>
    <source>
        <strain>ATCC 204508 / S288c</strain>
    </source>
</reference>
<reference key="2">
    <citation type="journal article" date="2014" name="G3 (Bethesda)">
        <title>The reference genome sequence of Saccharomyces cerevisiae: Then and now.</title>
        <authorList>
            <person name="Engel S.R."/>
            <person name="Dietrich F.S."/>
            <person name="Fisk D.G."/>
            <person name="Binkley G."/>
            <person name="Balakrishnan R."/>
            <person name="Costanzo M.C."/>
            <person name="Dwight S.S."/>
            <person name="Hitz B.C."/>
            <person name="Karra K."/>
            <person name="Nash R.S."/>
            <person name="Weng S."/>
            <person name="Wong E.D."/>
            <person name="Lloyd P."/>
            <person name="Skrzypek M.S."/>
            <person name="Miyasato S.R."/>
            <person name="Simison M."/>
            <person name="Cherry J.M."/>
        </authorList>
    </citation>
    <scope>GENOME REANNOTATION</scope>
    <source>
        <strain>ATCC 204508 / S288c</strain>
    </source>
</reference>
<reference key="3">
    <citation type="submission" date="2005-06" db="UniProtKB">
        <authorList>
            <person name="Bienvenut W.V."/>
            <person name="Peters C."/>
        </authorList>
    </citation>
    <scope>PROTEIN SEQUENCE OF 36-43; 166-175; 197-207 AND 222-238</scope>
    <scope>IDENTIFICATION BY MASS SPECTROMETRY</scope>
</reference>
<reference key="4">
    <citation type="journal article" date="2003" name="Nature">
        <title>Global analysis of protein localization in budding yeast.</title>
        <authorList>
            <person name="Huh W.-K."/>
            <person name="Falvo J.V."/>
            <person name="Gerke L.C."/>
            <person name="Carroll A.S."/>
            <person name="Howson R.W."/>
            <person name="Weissman J.S."/>
            <person name="O'Shea E.K."/>
        </authorList>
    </citation>
    <scope>SUBCELLULAR LOCATION [LARGE SCALE ANALYSIS]</scope>
</reference>
<reference key="5">
    <citation type="journal article" date="2003" name="Nature">
        <title>Global analysis of protein expression in yeast.</title>
        <authorList>
            <person name="Ghaemmaghami S."/>
            <person name="Huh W.-K."/>
            <person name="Bower K."/>
            <person name="Howson R.W."/>
            <person name="Belle A."/>
            <person name="Dephoure N."/>
            <person name="O'Shea E.K."/>
            <person name="Weissman J.S."/>
        </authorList>
    </citation>
    <scope>LEVEL OF PROTEIN EXPRESSION [LARGE SCALE ANALYSIS]</scope>
</reference>
<reference key="6">
    <citation type="journal article" date="2004" name="J. Biol. Chem.">
        <title>Pil1p and Lsp1p negatively regulate the 3-phosphoinositide-dependent protein kinase-like kinase Pkh1p and downstream signaling pathways Pkc1p and Ypk1p.</title>
        <authorList>
            <person name="Zhang X."/>
            <person name="Lester R.L."/>
            <person name="Dickson R.C."/>
        </authorList>
    </citation>
    <scope>FUNCTION</scope>
    <scope>PHOSPHORYLATION BY PKH1 AND PHK2</scope>
</reference>
<reference key="7">
    <citation type="journal article" date="2005" name="Mol. Cell. Proteomics">
        <title>Quantitative phosphoproteomics applied to the yeast pheromone signaling pathway.</title>
        <authorList>
            <person name="Gruhler A."/>
            <person name="Olsen J.V."/>
            <person name="Mohammed S."/>
            <person name="Mortensen P."/>
            <person name="Faergeman N.J."/>
            <person name="Mann M."/>
            <person name="Jensen O.N."/>
        </authorList>
    </citation>
    <scope>PHOSPHORYLATION [LARGE SCALE ANALYSIS] AT THR-233</scope>
    <scope>IDENTIFICATION BY MASS SPECTROMETRY [LARGE SCALE ANALYSIS]</scope>
    <source>
        <strain>YAL6B</strain>
    </source>
</reference>
<reference key="8">
    <citation type="journal article" date="2006" name="Nature">
        <title>Eisosomes mark static sites of endocytosis.</title>
        <authorList>
            <person name="Walther T.C."/>
            <person name="Brickner J.H."/>
            <person name="Aguilar P.S."/>
            <person name="Bernales S."/>
            <person name="Pantoja C."/>
            <person name="Walter P."/>
        </authorList>
    </citation>
    <scope>SUBCELLULAR LOCATION</scope>
</reference>
<reference key="9">
    <citation type="journal article" date="2007" name="J. Proteome Res.">
        <title>Large-scale phosphorylation analysis of alpha-factor-arrested Saccharomyces cerevisiae.</title>
        <authorList>
            <person name="Li X."/>
            <person name="Gerber S.A."/>
            <person name="Rudner A.D."/>
            <person name="Beausoleil S.A."/>
            <person name="Haas W."/>
            <person name="Villen J."/>
            <person name="Elias J.E."/>
            <person name="Gygi S.P."/>
        </authorList>
    </citation>
    <scope>PHOSPHORYLATION [LARGE SCALE ANALYSIS] AT THR-233</scope>
    <scope>IDENTIFICATION BY MASS SPECTROMETRY [LARGE SCALE ANALYSIS]</scope>
    <source>
        <strain>ADR376</strain>
    </source>
</reference>
<reference key="10">
    <citation type="journal article" date="2008" name="Mol. Cell. Proteomics">
        <title>A multidimensional chromatography technology for in-depth phosphoproteome analysis.</title>
        <authorList>
            <person name="Albuquerque C.P."/>
            <person name="Smolka M.B."/>
            <person name="Payne S.H."/>
            <person name="Bafna V."/>
            <person name="Eng J."/>
            <person name="Zhou H."/>
        </authorList>
    </citation>
    <scope>PHOSPHORYLATION [LARGE SCALE ANALYSIS] AT THR-233</scope>
    <scope>IDENTIFICATION BY MASS SPECTROMETRY [LARGE SCALE ANALYSIS]</scope>
</reference>
<reference key="11">
    <citation type="journal article" date="2009" name="Mol. Syst. Biol.">
        <title>Global analysis of the glycoproteome in Saccharomyces cerevisiae reveals new roles for protein glycosylation in eukaryotes.</title>
        <authorList>
            <person name="Kung L.A."/>
            <person name="Tao S.-C."/>
            <person name="Qian J."/>
            <person name="Smith M.G."/>
            <person name="Snyder M."/>
            <person name="Zhu H."/>
        </authorList>
    </citation>
    <scope>GLYCOSYLATION [LARGE SCALE ANALYSIS]</scope>
</reference>
<reference key="12">
    <citation type="journal article" date="2009" name="Science">
        <title>Global analysis of Cdk1 substrate phosphorylation sites provides insights into evolution.</title>
        <authorList>
            <person name="Holt L.J."/>
            <person name="Tuch B.B."/>
            <person name="Villen J."/>
            <person name="Johnson A.D."/>
            <person name="Gygi S.P."/>
            <person name="Morgan D.O."/>
        </authorList>
    </citation>
    <scope>PHOSPHORYLATION [LARGE SCALE ANALYSIS] AT THR-233</scope>
    <scope>IDENTIFICATION BY MASS SPECTROMETRY [LARGE SCALE ANALYSIS]</scope>
</reference>
<proteinExistence type="evidence at protein level"/>
<keyword id="KW-0002">3D-structure</keyword>
<keyword id="KW-0963">Cytoplasm</keyword>
<keyword id="KW-0903">Direct protein sequencing</keyword>
<keyword id="KW-0325">Glycoprotein</keyword>
<keyword id="KW-0597">Phosphoprotein</keyword>
<keyword id="KW-1185">Reference proteome</keyword>
<organism>
    <name type="scientific">Saccharomyces cerevisiae (strain ATCC 204508 / S288c)</name>
    <name type="common">Baker's yeast</name>
    <dbReference type="NCBI Taxonomy" id="559292"/>
    <lineage>
        <taxon>Eukaryota</taxon>
        <taxon>Fungi</taxon>
        <taxon>Dikarya</taxon>
        <taxon>Ascomycota</taxon>
        <taxon>Saccharomycotina</taxon>
        <taxon>Saccharomycetes</taxon>
        <taxon>Saccharomycetales</taxon>
        <taxon>Saccharomycetaceae</taxon>
        <taxon>Saccharomyces</taxon>
    </lineage>
</organism>
<protein>
    <recommendedName>
        <fullName>Sphingolipid long chain base-responsive protein LSP1</fullName>
    </recommendedName>
</protein>